<gene>
    <name evidence="4 6" type="primary">Nmt1</name>
</gene>
<accession>O70310</accession>
<dbReference type="EC" id="2.3.1.97" evidence="3"/>
<dbReference type="EMBL" id="AF043326">
    <property type="protein sequence ID" value="AAC09296.1"/>
    <property type="molecule type" value="mRNA"/>
</dbReference>
<dbReference type="EMBL" id="BC016526">
    <property type="protein sequence ID" value="AAH16526.1"/>
    <property type="molecule type" value="mRNA"/>
</dbReference>
<dbReference type="EMBL" id="BC021635">
    <property type="protein sequence ID" value="AAH21635.1"/>
    <property type="molecule type" value="mRNA"/>
</dbReference>
<dbReference type="CCDS" id="CCDS25511.1"/>
<dbReference type="RefSeq" id="NP_032733.1">
    <property type="nucleotide sequence ID" value="NM_008707.4"/>
</dbReference>
<dbReference type="RefSeq" id="XP_006532508.1">
    <property type="nucleotide sequence ID" value="XM_006532445.5"/>
</dbReference>
<dbReference type="SMR" id="O70310"/>
<dbReference type="BioGRID" id="201793">
    <property type="interactions" value="19"/>
</dbReference>
<dbReference type="FunCoup" id="O70310">
    <property type="interactions" value="3938"/>
</dbReference>
<dbReference type="IntAct" id="O70310">
    <property type="interactions" value="1"/>
</dbReference>
<dbReference type="STRING" id="10090.ENSMUSP00000021314"/>
<dbReference type="GlyGen" id="O70310">
    <property type="glycosylation" value="2 sites, 1 O-linked glycan (2 sites)"/>
</dbReference>
<dbReference type="iPTMnet" id="O70310"/>
<dbReference type="PhosphoSitePlus" id="O70310"/>
<dbReference type="SwissPalm" id="O70310"/>
<dbReference type="jPOST" id="O70310"/>
<dbReference type="PaxDb" id="10090-ENSMUSP00000021314"/>
<dbReference type="PeptideAtlas" id="O70310"/>
<dbReference type="ProteomicsDB" id="293588"/>
<dbReference type="Pumba" id="O70310"/>
<dbReference type="Antibodypedia" id="17578">
    <property type="antibodies" value="199 antibodies from 25 providers"/>
</dbReference>
<dbReference type="DNASU" id="18107"/>
<dbReference type="Ensembl" id="ENSMUST00000021314.8">
    <property type="protein sequence ID" value="ENSMUSP00000021314.8"/>
    <property type="gene ID" value="ENSMUSG00000020936.9"/>
</dbReference>
<dbReference type="GeneID" id="18107"/>
<dbReference type="KEGG" id="mmu:18107"/>
<dbReference type="UCSC" id="uc007ltd.1">
    <property type="organism name" value="mouse"/>
</dbReference>
<dbReference type="AGR" id="MGI:102579"/>
<dbReference type="CTD" id="4836"/>
<dbReference type="MGI" id="MGI:102579">
    <property type="gene designation" value="Nmt1"/>
</dbReference>
<dbReference type="VEuPathDB" id="HostDB:ENSMUSG00000020936"/>
<dbReference type="eggNOG" id="KOG2779">
    <property type="taxonomic scope" value="Eukaryota"/>
</dbReference>
<dbReference type="GeneTree" id="ENSGT00390000017837"/>
<dbReference type="HOGENOM" id="CLU_022882_1_0_1"/>
<dbReference type="InParanoid" id="O70310"/>
<dbReference type="OMA" id="GWKRDWH"/>
<dbReference type="OrthoDB" id="60315at2759"/>
<dbReference type="PhylomeDB" id="O70310"/>
<dbReference type="TreeFam" id="TF300701"/>
<dbReference type="BRENDA" id="2.3.1.97">
    <property type="organism ID" value="3474"/>
</dbReference>
<dbReference type="Reactome" id="R-MMU-2514859">
    <property type="pathway name" value="Inactivation, recovery and regulation of the phototransduction cascade"/>
</dbReference>
<dbReference type="Reactome" id="R-MMU-75108">
    <property type="pathway name" value="Activation, myristolyation of BID and translocation to mitochondria"/>
</dbReference>
<dbReference type="BioGRID-ORCS" id="18107">
    <property type="hits" value="9 hits in 82 CRISPR screens"/>
</dbReference>
<dbReference type="ChiTaRS" id="Nmt1">
    <property type="organism name" value="mouse"/>
</dbReference>
<dbReference type="PRO" id="PR:O70310"/>
<dbReference type="Proteomes" id="UP000000589">
    <property type="component" value="Chromosome 11"/>
</dbReference>
<dbReference type="RNAct" id="O70310">
    <property type="molecule type" value="protein"/>
</dbReference>
<dbReference type="Bgee" id="ENSMUSG00000020936">
    <property type="expression patterns" value="Expressed in ileal epithelium and 259 other cell types or tissues"/>
</dbReference>
<dbReference type="ExpressionAtlas" id="O70310">
    <property type="expression patterns" value="baseline and differential"/>
</dbReference>
<dbReference type="GO" id="GO:0005737">
    <property type="term" value="C:cytoplasm"/>
    <property type="evidence" value="ECO:0000250"/>
    <property type="project" value="UniProtKB"/>
</dbReference>
<dbReference type="GO" id="GO:0005829">
    <property type="term" value="C:cytosol"/>
    <property type="evidence" value="ECO:0007669"/>
    <property type="project" value="UniProtKB-SubCell"/>
</dbReference>
<dbReference type="GO" id="GO:0005886">
    <property type="term" value="C:plasma membrane"/>
    <property type="evidence" value="ECO:0007669"/>
    <property type="project" value="Ensembl"/>
</dbReference>
<dbReference type="GO" id="GO:0004379">
    <property type="term" value="F:glycylpeptide N-tetradecanoyltransferase activity"/>
    <property type="evidence" value="ECO:0000315"/>
    <property type="project" value="MGI"/>
</dbReference>
<dbReference type="GO" id="GO:0018030">
    <property type="term" value="F:peptidyl-lysine N6-myristoyltransferase activity"/>
    <property type="evidence" value="ECO:0000250"/>
    <property type="project" value="UniProtKB"/>
</dbReference>
<dbReference type="GO" id="GO:0001701">
    <property type="term" value="P:in utero embryonic development"/>
    <property type="evidence" value="ECO:0000315"/>
    <property type="project" value="MGI"/>
</dbReference>
<dbReference type="GO" id="GO:0042180">
    <property type="term" value="P:ketone metabolic process"/>
    <property type="evidence" value="ECO:0007669"/>
    <property type="project" value="Ensembl"/>
</dbReference>
<dbReference type="GO" id="GO:0018008">
    <property type="term" value="P:N-terminal peptidyl-glycine N-myristoylation"/>
    <property type="evidence" value="ECO:0000250"/>
    <property type="project" value="UniProtKB"/>
</dbReference>
<dbReference type="GO" id="GO:0072657">
    <property type="term" value="P:protein localization to membrane"/>
    <property type="evidence" value="ECO:0007669"/>
    <property type="project" value="Ensembl"/>
</dbReference>
<dbReference type="CDD" id="cd04301">
    <property type="entry name" value="NAT_SF"/>
    <property type="match status" value="1"/>
</dbReference>
<dbReference type="FunFam" id="3.40.630.170:FF:000001">
    <property type="entry name" value="Glycylpeptide N-tetradecanoyltransferase"/>
    <property type="match status" value="1"/>
</dbReference>
<dbReference type="Gene3D" id="3.40.630.170">
    <property type="match status" value="1"/>
</dbReference>
<dbReference type="InterPro" id="IPR016181">
    <property type="entry name" value="Acyl_CoA_acyltransferase"/>
</dbReference>
<dbReference type="InterPro" id="IPR000903">
    <property type="entry name" value="NMT"/>
</dbReference>
<dbReference type="InterPro" id="IPR022677">
    <property type="entry name" value="NMT_C"/>
</dbReference>
<dbReference type="InterPro" id="IPR022678">
    <property type="entry name" value="NMT_CS"/>
</dbReference>
<dbReference type="InterPro" id="IPR022676">
    <property type="entry name" value="NMT_N"/>
</dbReference>
<dbReference type="PANTHER" id="PTHR11377:SF7">
    <property type="entry name" value="GLYCYLPEPTIDE N-TETRADECANOYLTRANSFERASE 1"/>
    <property type="match status" value="1"/>
</dbReference>
<dbReference type="PANTHER" id="PTHR11377">
    <property type="entry name" value="N-MYRISTOYL TRANSFERASE"/>
    <property type="match status" value="1"/>
</dbReference>
<dbReference type="Pfam" id="PF01233">
    <property type="entry name" value="NMT"/>
    <property type="match status" value="1"/>
</dbReference>
<dbReference type="Pfam" id="PF02799">
    <property type="entry name" value="NMT_C"/>
    <property type="match status" value="1"/>
</dbReference>
<dbReference type="PIRSF" id="PIRSF015892">
    <property type="entry name" value="N-myristl_transf"/>
    <property type="match status" value="1"/>
</dbReference>
<dbReference type="SUPFAM" id="SSF55729">
    <property type="entry name" value="Acyl-CoA N-acyltransferases (Nat)"/>
    <property type="match status" value="2"/>
</dbReference>
<dbReference type="PROSITE" id="PS00975">
    <property type="entry name" value="NMT_1"/>
    <property type="match status" value="1"/>
</dbReference>
<dbReference type="PROSITE" id="PS00976">
    <property type="entry name" value="NMT_2"/>
    <property type="match status" value="1"/>
</dbReference>
<protein>
    <recommendedName>
        <fullName>Glycylpeptide N-tetradecanoyltransferase 1</fullName>
        <ecNumber evidence="3">2.3.1.97</ecNumber>
    </recommendedName>
    <alternativeName>
        <fullName>Myristoyl-CoA:protein N-myristoyltransferase 1</fullName>
        <shortName>NMT 1</shortName>
        <shortName>Type I N-myristoyltransferase</shortName>
    </alternativeName>
    <alternativeName>
        <fullName>Peptide N-myristoyltransferase 1</fullName>
    </alternativeName>
</protein>
<feature type="chain" id="PRO_0000064222" description="Glycylpeptide N-tetradecanoyltransferase 1">
    <location>
        <begin position="1"/>
        <end position="496"/>
    </location>
</feature>
<feature type="region of interest" description="Disordered" evidence="2">
    <location>
        <begin position="1"/>
        <end position="82"/>
    </location>
</feature>
<feature type="compositionally biased region" description="Basic residues" evidence="2">
    <location>
        <begin position="55"/>
        <end position="66"/>
    </location>
</feature>
<feature type="binding site" evidence="1">
    <location>
        <position position="118"/>
    </location>
    <ligand>
        <name>tetradecanoyl-CoA</name>
        <dbReference type="ChEBI" id="CHEBI:57385"/>
    </ligand>
</feature>
<feature type="binding site" evidence="1">
    <location>
        <position position="119"/>
    </location>
    <ligand>
        <name>tetradecanoyl-CoA</name>
        <dbReference type="ChEBI" id="CHEBI:57385"/>
    </ligand>
</feature>
<feature type="binding site" evidence="1">
    <location>
        <position position="120"/>
    </location>
    <ligand>
        <name>tetradecanoyl-CoA</name>
        <dbReference type="ChEBI" id="CHEBI:57385"/>
    </ligand>
</feature>
<feature type="binding site" evidence="1">
    <location>
        <position position="247"/>
    </location>
    <ligand>
        <name>tetradecanoyl-CoA</name>
        <dbReference type="ChEBI" id="CHEBI:57385"/>
    </ligand>
</feature>
<feature type="binding site" evidence="1">
    <location>
        <position position="248"/>
    </location>
    <ligand>
        <name>tetradecanoyl-CoA</name>
        <dbReference type="ChEBI" id="CHEBI:57385"/>
    </ligand>
</feature>
<feature type="binding site" evidence="1">
    <location>
        <position position="249"/>
    </location>
    <ligand>
        <name>tetradecanoyl-CoA</name>
        <dbReference type="ChEBI" id="CHEBI:57385"/>
    </ligand>
</feature>
<feature type="binding site" evidence="1">
    <location>
        <position position="250"/>
    </location>
    <ligand>
        <name>tetradecanoyl-CoA</name>
        <dbReference type="ChEBI" id="CHEBI:57385"/>
    </ligand>
</feature>
<feature type="binding site" evidence="1">
    <location>
        <position position="256"/>
    </location>
    <ligand>
        <name>tetradecanoyl-CoA</name>
        <dbReference type="ChEBI" id="CHEBI:57385"/>
    </ligand>
</feature>
<feature type="binding site" evidence="1">
    <location>
        <position position="258"/>
    </location>
    <ligand>
        <name>tetradecanoyl-CoA</name>
        <dbReference type="ChEBI" id="CHEBI:57385"/>
    </ligand>
</feature>
<feature type="binding site" evidence="1">
    <location>
        <position position="259"/>
    </location>
    <ligand>
        <name>tetradecanoyl-CoA</name>
        <dbReference type="ChEBI" id="CHEBI:57385"/>
    </ligand>
</feature>
<feature type="binding site" evidence="1">
    <location>
        <position position="260"/>
    </location>
    <ligand>
        <name>tetradecanoyl-CoA</name>
        <dbReference type="ChEBI" id="CHEBI:57385"/>
    </ligand>
</feature>
<feature type="modified residue" description="Phosphoserine" evidence="7 8">
    <location>
        <position position="31"/>
    </location>
</feature>
<feature type="modified residue" description="Phosphoserine" evidence="8">
    <location>
        <position position="47"/>
    </location>
</feature>
<feature type="modified residue" description="Phosphoserine" evidence="1">
    <location>
        <position position="83"/>
    </location>
</feature>
<reference key="1">
    <citation type="journal article" date="1998" name="J. Biol. Chem.">
        <title>A second mammalian N-myristoyltransferase.</title>
        <authorList>
            <person name="Giang D.K."/>
            <person name="Cravatt B.F."/>
        </authorList>
    </citation>
    <scope>NUCLEOTIDE SEQUENCE [MRNA]</scope>
    <source>
        <tissue>Liver</tissue>
    </source>
</reference>
<reference key="2">
    <citation type="journal article" date="2004" name="Genome Res.">
        <title>The status, quality, and expansion of the NIH full-length cDNA project: the Mammalian Gene Collection (MGC).</title>
        <authorList>
            <consortium name="The MGC Project Team"/>
        </authorList>
    </citation>
    <scope>NUCLEOTIDE SEQUENCE [LARGE SCALE MRNA]</scope>
    <source>
        <strain>Czech II</strain>
        <tissue>Mammary gland</tissue>
    </source>
</reference>
<reference key="3">
    <citation type="journal article" date="2005" name="J. Biol. Chem.">
        <title>N-myristoyltransferase 1 is essential in early mouse development.</title>
        <authorList>
            <person name="Yang S.H."/>
            <person name="Shrivastav A."/>
            <person name="Kosinski C."/>
            <person name="Sharma R.K."/>
            <person name="Chen M.H."/>
            <person name="Berthiaume L.G."/>
            <person name="Peters L.L."/>
            <person name="Chuang P.T."/>
            <person name="Young S.G."/>
            <person name="Bergo M.O."/>
        </authorList>
    </citation>
    <scope>DISRUPTION PHENOTYPE</scope>
    <scope>FUNCTION</scope>
    <scope>CATALYTIC ACTIVITY</scope>
    <scope>TISSUE SPECIFICITY</scope>
</reference>
<reference key="4">
    <citation type="journal article" date="2007" name="Proc. Natl. Acad. Sci. U.S.A.">
        <title>Large-scale phosphorylation analysis of mouse liver.</title>
        <authorList>
            <person name="Villen J."/>
            <person name="Beausoleil S.A."/>
            <person name="Gerber S.A."/>
            <person name="Gygi S.P."/>
        </authorList>
    </citation>
    <scope>PHOSPHORYLATION [LARGE SCALE ANALYSIS] AT SER-31</scope>
    <scope>IDENTIFICATION BY MASS SPECTROMETRY [LARGE SCALE ANALYSIS]</scope>
    <source>
        <tissue>Liver</tissue>
    </source>
</reference>
<reference key="5">
    <citation type="journal article" date="2010" name="Cell">
        <title>A tissue-specific atlas of mouse protein phosphorylation and expression.</title>
        <authorList>
            <person name="Huttlin E.L."/>
            <person name="Jedrychowski M.P."/>
            <person name="Elias J.E."/>
            <person name="Goswami T."/>
            <person name="Rad R."/>
            <person name="Beausoleil S.A."/>
            <person name="Villen J."/>
            <person name="Haas W."/>
            <person name="Sowa M.E."/>
            <person name="Gygi S.P."/>
        </authorList>
    </citation>
    <scope>PHOSPHORYLATION [LARGE SCALE ANALYSIS] AT SER-31 AND SER-47</scope>
    <scope>IDENTIFICATION BY MASS SPECTROMETRY [LARGE SCALE ANALYSIS]</scope>
    <source>
        <tissue>Brain</tissue>
        <tissue>Brown adipose tissue</tissue>
        <tissue>Heart</tissue>
        <tissue>Kidney</tissue>
        <tissue>Liver</tissue>
        <tissue>Lung</tissue>
        <tissue>Pancreas</tissue>
        <tissue>Spleen</tissue>
        <tissue>Testis</tissue>
    </source>
</reference>
<evidence type="ECO:0000250" key="1">
    <source>
        <dbReference type="UniProtKB" id="P30419"/>
    </source>
</evidence>
<evidence type="ECO:0000256" key="2">
    <source>
        <dbReference type="SAM" id="MobiDB-lite"/>
    </source>
</evidence>
<evidence type="ECO:0000269" key="3">
    <source>
    </source>
</evidence>
<evidence type="ECO:0000303" key="4">
    <source>
    </source>
</evidence>
<evidence type="ECO:0000305" key="5"/>
<evidence type="ECO:0000312" key="6">
    <source>
        <dbReference type="MGI" id="MGI:102579"/>
    </source>
</evidence>
<evidence type="ECO:0007744" key="7">
    <source>
    </source>
</evidence>
<evidence type="ECO:0007744" key="8">
    <source>
    </source>
</evidence>
<proteinExistence type="evidence at protein level"/>
<name>NMT1_MOUSE</name>
<sequence length="496" mass="56888">MADESETAVKLPAPSLPLMMEGNGNGHEHCSDCENEEDNSHNRSGLSPANDTGAKKKKKKQKKKKEKGSDMESTQDQPVKMTSLPAERIQEIQKAIELFSVGQGPAKTMEEASKRSYQFWDTQPVPKLGEVVNTHGPVEPDKDNIRQEPYTLPQGFTWDALDLGDRGVLKELYTLLNENYVEDDDNMFRFDYSPEFLLWALRPPGWLPQWHCGVRVVSSRKLVGFISAIPANIHIYDTEKKMVEINFLCVHKKLRSKRVAPVLIREITRRVHLEGIFQAVYTAGVVLPKPVGTCRYWHRSLNPRKLIEVKFSHLSRNMTMQRTMKLYRLPETPKTAGLRPMEKKDIPVVHQLLSRYLKQFHLTPVMNQEEVEHWFYPQENIIDTFVVENANGEVTDFLSFYTLPSTIMNHPTHKSLKAAYSFYNVHTQTPLLDLMSDALVLAKMKGFDVFNALDLMENKTFLEKLKFGIGDGNLQYYLYNWKCPSMGAEKVGLVLQ</sequence>
<organism>
    <name type="scientific">Mus musculus</name>
    <name type="common">Mouse</name>
    <dbReference type="NCBI Taxonomy" id="10090"/>
    <lineage>
        <taxon>Eukaryota</taxon>
        <taxon>Metazoa</taxon>
        <taxon>Chordata</taxon>
        <taxon>Craniata</taxon>
        <taxon>Vertebrata</taxon>
        <taxon>Euteleostomi</taxon>
        <taxon>Mammalia</taxon>
        <taxon>Eutheria</taxon>
        <taxon>Euarchontoglires</taxon>
        <taxon>Glires</taxon>
        <taxon>Rodentia</taxon>
        <taxon>Myomorpha</taxon>
        <taxon>Muroidea</taxon>
        <taxon>Muridae</taxon>
        <taxon>Murinae</taxon>
        <taxon>Mus</taxon>
        <taxon>Mus</taxon>
    </lineage>
</organism>
<keyword id="KW-0012">Acyltransferase</keyword>
<keyword id="KW-0963">Cytoplasm</keyword>
<keyword id="KW-0472">Membrane</keyword>
<keyword id="KW-0597">Phosphoprotein</keyword>
<keyword id="KW-1185">Reference proteome</keyword>
<keyword id="KW-0808">Transferase</keyword>
<comment type="function">
    <text evidence="1 3">Adds a myristoyl group to the N-terminal glycine residue of certain cellular and viral proteins (PubMed:15753093). Also able to mediate N-terminal lysine myristoylation of proteins: catalyzes myristoylation of ARF6 on both 'Gly-2' and 'Lys-3' (By similarity). Lysine myristoylation is required to maintain ARF6 on membranes during the GTPase cycle (By similarity). Required for normal embryogenesis (PubMed:15753093).</text>
</comment>
<comment type="catalytic activity">
    <reaction evidence="3">
        <text>N-terminal glycyl-[protein] + tetradecanoyl-CoA = N-tetradecanoylglycyl-[protein] + CoA + H(+)</text>
        <dbReference type="Rhea" id="RHEA:15521"/>
        <dbReference type="Rhea" id="RHEA-COMP:12666"/>
        <dbReference type="Rhea" id="RHEA-COMP:12667"/>
        <dbReference type="ChEBI" id="CHEBI:15378"/>
        <dbReference type="ChEBI" id="CHEBI:57287"/>
        <dbReference type="ChEBI" id="CHEBI:57385"/>
        <dbReference type="ChEBI" id="CHEBI:64723"/>
        <dbReference type="ChEBI" id="CHEBI:133050"/>
        <dbReference type="EC" id="2.3.1.97"/>
    </reaction>
</comment>
<comment type="catalytic activity">
    <reaction evidence="1">
        <text>N-terminal glycyl-L-lysyl-[protein] + tetradecanoyl-CoA = N-terminal glycyl-(N(6)-tetradecanoyl)-L-lysyl-[protein] + CoA + H(+)</text>
        <dbReference type="Rhea" id="RHEA:70671"/>
        <dbReference type="Rhea" id="RHEA-COMP:17947"/>
        <dbReference type="Rhea" id="RHEA-COMP:17948"/>
        <dbReference type="ChEBI" id="CHEBI:15378"/>
        <dbReference type="ChEBI" id="CHEBI:57287"/>
        <dbReference type="ChEBI" id="CHEBI:57385"/>
        <dbReference type="ChEBI" id="CHEBI:189855"/>
        <dbReference type="ChEBI" id="CHEBI:189856"/>
    </reaction>
    <physiologicalReaction direction="left-to-right" evidence="1">
        <dbReference type="Rhea" id="RHEA:70672"/>
    </physiologicalReaction>
</comment>
<comment type="subcellular location">
    <subcellularLocation>
        <location evidence="1">Cytoplasm</location>
    </subcellularLocation>
    <subcellularLocation>
        <location evidence="1">Cytoplasm</location>
        <location evidence="1">Cytosol</location>
    </subcellularLocation>
    <subcellularLocation>
        <location evidence="1">Membrane</location>
        <topology evidence="1">Peripheral membrane protein</topology>
    </subcellularLocation>
    <text evidence="1">Copurifies with ribosomes.</text>
</comment>
<comment type="tissue specificity">
    <text evidence="3">Ubiquitous.</text>
</comment>
<comment type="disruption phenotype">
    <text evidence="3">Complete embryonic lethality. Embryos die between 3.5 and 7.5 dpc.</text>
</comment>
<comment type="similarity">
    <text evidence="5">Belongs to the NMT family.</text>
</comment>